<feature type="transit peptide" description="Mitochondrion" evidence="3">
    <location>
        <begin position="1"/>
        <end position="18"/>
    </location>
</feature>
<feature type="chain" id="PRO_0000000903" description="Enoyl-[acyl-carrier-protein] reductase, mitochondrial" evidence="3">
    <location>
        <begin position="19"/>
        <end position="372"/>
    </location>
</feature>
<feature type="active site" description="Proton donor" evidence="2">
    <location>
        <position position="72"/>
    </location>
</feature>
<feature type="binding site" evidence="2">
    <location>
        <position position="157"/>
    </location>
    <ligand>
        <name>NADP(+)</name>
        <dbReference type="ChEBI" id="CHEBI:58349"/>
    </ligand>
</feature>
<feature type="binding site" evidence="2">
    <location>
        <begin position="183"/>
        <end position="186"/>
    </location>
    <ligand>
        <name>NADP(+)</name>
        <dbReference type="ChEBI" id="CHEBI:58349"/>
    </ligand>
</feature>
<feature type="binding site" evidence="2">
    <location>
        <begin position="206"/>
        <end position="208"/>
    </location>
    <ligand>
        <name>NADP(+)</name>
        <dbReference type="ChEBI" id="CHEBI:58349"/>
    </ligand>
</feature>
<feature type="binding site" evidence="2">
    <location>
        <begin position="279"/>
        <end position="282"/>
    </location>
    <ligand>
        <name>NADP(+)</name>
        <dbReference type="ChEBI" id="CHEBI:58349"/>
    </ligand>
</feature>
<feature type="binding site" evidence="2">
    <location>
        <begin position="304"/>
        <end position="306"/>
    </location>
    <ligand>
        <name>NADP(+)</name>
        <dbReference type="ChEBI" id="CHEBI:58349"/>
    </ligand>
</feature>
<feature type="binding site" evidence="2">
    <location>
        <position position="365"/>
    </location>
    <ligand>
        <name>NADP(+)</name>
        <dbReference type="ChEBI" id="CHEBI:58349"/>
    </ligand>
</feature>
<accession>Q10488</accession>
<sequence>MSFFKTAVRRFSSTSITRGMAKAIAYSEYGNPKEVLRAVSYNVPKCSKNQVNVRFLASPINPSDINQIQGVYPSKPPFTNDVCSSKPSAVAGNEGLVEVVDVGDQFKGTFSPGQWAILGSVNLGSWRTEMNIDGRSLVPVDKSAFPSIAEAATLSVNPCTAYCLLQHVVQLNKGDWFIQDGANSMVGIATIQLAKHFGYKSINVVRNRPDIEKLKEQLKSLGATIVITDEELMDRKTMKQKVPEWIQGGEVKLGIDCVSGRVAAEMAKYMSKGATMATFGGMSRQPLPVPVSLLIFKNLKFHGFWVTKWKSEHPEEFLKIIHKVEDFYRNGTLKTVNTELVSLKEDADEKTFLDTFLNAIEGHGKKIIKFEH</sequence>
<proteinExistence type="inferred from homology"/>
<gene>
    <name type="primary">etr1</name>
    <name type="ORF">SPAC26F1.04c</name>
</gene>
<evidence type="ECO:0000250" key="1">
    <source>
        <dbReference type="UniProtKB" id="P38071"/>
    </source>
</evidence>
<evidence type="ECO:0000250" key="2">
    <source>
        <dbReference type="UniProtKB" id="Q8WZM3"/>
    </source>
</evidence>
<evidence type="ECO:0000255" key="3"/>
<evidence type="ECO:0000305" key="4"/>
<reference key="1">
    <citation type="journal article" date="2002" name="Nature">
        <title>The genome sequence of Schizosaccharomyces pombe.</title>
        <authorList>
            <person name="Wood V."/>
            <person name="Gwilliam R."/>
            <person name="Rajandream M.A."/>
            <person name="Lyne M.H."/>
            <person name="Lyne R."/>
            <person name="Stewart A."/>
            <person name="Sgouros J.G."/>
            <person name="Peat N."/>
            <person name="Hayles J."/>
            <person name="Baker S.G."/>
            <person name="Basham D."/>
            <person name="Bowman S."/>
            <person name="Brooks K."/>
            <person name="Brown D."/>
            <person name="Brown S."/>
            <person name="Chillingworth T."/>
            <person name="Churcher C.M."/>
            <person name="Collins M."/>
            <person name="Connor R."/>
            <person name="Cronin A."/>
            <person name="Davis P."/>
            <person name="Feltwell T."/>
            <person name="Fraser A."/>
            <person name="Gentles S."/>
            <person name="Goble A."/>
            <person name="Hamlin N."/>
            <person name="Harris D.E."/>
            <person name="Hidalgo J."/>
            <person name="Hodgson G."/>
            <person name="Holroyd S."/>
            <person name="Hornsby T."/>
            <person name="Howarth S."/>
            <person name="Huckle E.J."/>
            <person name="Hunt S."/>
            <person name="Jagels K."/>
            <person name="James K.D."/>
            <person name="Jones L."/>
            <person name="Jones M."/>
            <person name="Leather S."/>
            <person name="McDonald S."/>
            <person name="McLean J."/>
            <person name="Mooney P."/>
            <person name="Moule S."/>
            <person name="Mungall K.L."/>
            <person name="Murphy L.D."/>
            <person name="Niblett D."/>
            <person name="Odell C."/>
            <person name="Oliver K."/>
            <person name="O'Neil S."/>
            <person name="Pearson D."/>
            <person name="Quail M.A."/>
            <person name="Rabbinowitsch E."/>
            <person name="Rutherford K.M."/>
            <person name="Rutter S."/>
            <person name="Saunders D."/>
            <person name="Seeger K."/>
            <person name="Sharp S."/>
            <person name="Skelton J."/>
            <person name="Simmonds M.N."/>
            <person name="Squares R."/>
            <person name="Squares S."/>
            <person name="Stevens K."/>
            <person name="Taylor K."/>
            <person name="Taylor R.G."/>
            <person name="Tivey A."/>
            <person name="Walsh S.V."/>
            <person name="Warren T."/>
            <person name="Whitehead S."/>
            <person name="Woodward J.R."/>
            <person name="Volckaert G."/>
            <person name="Aert R."/>
            <person name="Robben J."/>
            <person name="Grymonprez B."/>
            <person name="Weltjens I."/>
            <person name="Vanstreels E."/>
            <person name="Rieger M."/>
            <person name="Schaefer M."/>
            <person name="Mueller-Auer S."/>
            <person name="Gabel C."/>
            <person name="Fuchs M."/>
            <person name="Duesterhoeft A."/>
            <person name="Fritzc C."/>
            <person name="Holzer E."/>
            <person name="Moestl D."/>
            <person name="Hilbert H."/>
            <person name="Borzym K."/>
            <person name="Langer I."/>
            <person name="Beck A."/>
            <person name="Lehrach H."/>
            <person name="Reinhardt R."/>
            <person name="Pohl T.M."/>
            <person name="Eger P."/>
            <person name="Zimmermann W."/>
            <person name="Wedler H."/>
            <person name="Wambutt R."/>
            <person name="Purnelle B."/>
            <person name="Goffeau A."/>
            <person name="Cadieu E."/>
            <person name="Dreano S."/>
            <person name="Gloux S."/>
            <person name="Lelaure V."/>
            <person name="Mottier S."/>
            <person name="Galibert F."/>
            <person name="Aves S.J."/>
            <person name="Xiang Z."/>
            <person name="Hunt C."/>
            <person name="Moore K."/>
            <person name="Hurst S.M."/>
            <person name="Lucas M."/>
            <person name="Rochet M."/>
            <person name="Gaillardin C."/>
            <person name="Tallada V.A."/>
            <person name="Garzon A."/>
            <person name="Thode G."/>
            <person name="Daga R.R."/>
            <person name="Cruzado L."/>
            <person name="Jimenez J."/>
            <person name="Sanchez M."/>
            <person name="del Rey F."/>
            <person name="Benito J."/>
            <person name="Dominguez A."/>
            <person name="Revuelta J.L."/>
            <person name="Moreno S."/>
            <person name="Armstrong J."/>
            <person name="Forsburg S.L."/>
            <person name="Cerutti L."/>
            <person name="Lowe T."/>
            <person name="McCombie W.R."/>
            <person name="Paulsen I."/>
            <person name="Potashkin J."/>
            <person name="Shpakovski G.V."/>
            <person name="Ussery D."/>
            <person name="Barrell B.G."/>
            <person name="Nurse P."/>
        </authorList>
    </citation>
    <scope>NUCLEOTIDE SEQUENCE [LARGE SCALE GENOMIC DNA]</scope>
    <source>
        <strain>972 / ATCC 24843</strain>
    </source>
</reference>
<dbReference type="EC" id="1.3.1.104" evidence="2"/>
<dbReference type="EMBL" id="CU329670">
    <property type="protein sequence ID" value="CAA97361.1"/>
    <property type="molecule type" value="Genomic_DNA"/>
</dbReference>
<dbReference type="PIR" id="T38416">
    <property type="entry name" value="T38416"/>
</dbReference>
<dbReference type="RefSeq" id="NP_594891.1">
    <property type="nucleotide sequence ID" value="NM_001020320.2"/>
</dbReference>
<dbReference type="SMR" id="Q10488"/>
<dbReference type="BioGRID" id="278576">
    <property type="interactions" value="2"/>
</dbReference>
<dbReference type="FunCoup" id="Q10488">
    <property type="interactions" value="360"/>
</dbReference>
<dbReference type="STRING" id="284812.Q10488"/>
<dbReference type="iPTMnet" id="Q10488"/>
<dbReference type="PaxDb" id="4896-SPAC26F1.04c.1"/>
<dbReference type="EnsemblFungi" id="SPAC26F1.04c.1">
    <property type="protein sequence ID" value="SPAC26F1.04c.1:pep"/>
    <property type="gene ID" value="SPAC26F1.04c"/>
</dbReference>
<dbReference type="GeneID" id="2542100"/>
<dbReference type="KEGG" id="spo:2542100"/>
<dbReference type="PomBase" id="SPAC26F1.04c">
    <property type="gene designation" value="etr1"/>
</dbReference>
<dbReference type="VEuPathDB" id="FungiDB:SPAC26F1.04c"/>
<dbReference type="eggNOG" id="KOG0025">
    <property type="taxonomic scope" value="Eukaryota"/>
</dbReference>
<dbReference type="HOGENOM" id="CLU_026673_17_0_1"/>
<dbReference type="InParanoid" id="Q10488"/>
<dbReference type="OMA" id="YGYTQSK"/>
<dbReference type="PhylomeDB" id="Q10488"/>
<dbReference type="Reactome" id="R-SPO-77346">
    <property type="pathway name" value="Beta oxidation of decanoyl-CoA to octanoyl-CoA-CoA"/>
</dbReference>
<dbReference type="PRO" id="PR:Q10488"/>
<dbReference type="Proteomes" id="UP000002485">
    <property type="component" value="Chromosome I"/>
</dbReference>
<dbReference type="GO" id="GO:0005737">
    <property type="term" value="C:cytoplasm"/>
    <property type="evidence" value="ECO:0007005"/>
    <property type="project" value="PomBase"/>
</dbReference>
<dbReference type="GO" id="GO:0005759">
    <property type="term" value="C:mitochondrial matrix"/>
    <property type="evidence" value="ECO:0007669"/>
    <property type="project" value="UniProtKB-SubCell"/>
</dbReference>
<dbReference type="GO" id="GO:0005739">
    <property type="term" value="C:mitochondrion"/>
    <property type="evidence" value="ECO:0000318"/>
    <property type="project" value="GO_Central"/>
</dbReference>
<dbReference type="GO" id="GO:0141148">
    <property type="term" value="F:enoyl-[acyl-carrier-protein] reductase (NADPH) activity"/>
    <property type="evidence" value="ECO:0000266"/>
    <property type="project" value="PomBase"/>
</dbReference>
<dbReference type="GO" id="GO:0008270">
    <property type="term" value="F:zinc ion binding"/>
    <property type="evidence" value="ECO:0000255"/>
    <property type="project" value="PomBase"/>
</dbReference>
<dbReference type="GO" id="GO:0006633">
    <property type="term" value="P:fatty acid biosynthetic process"/>
    <property type="evidence" value="ECO:0000266"/>
    <property type="project" value="PomBase"/>
</dbReference>
<dbReference type="GO" id="GO:0006631">
    <property type="term" value="P:fatty acid metabolic process"/>
    <property type="evidence" value="ECO:0000318"/>
    <property type="project" value="GO_Central"/>
</dbReference>
<dbReference type="CDD" id="cd08290">
    <property type="entry name" value="ETR"/>
    <property type="match status" value="1"/>
</dbReference>
<dbReference type="FunFam" id="3.40.50.720:FF:000112">
    <property type="entry name" value="Enoyl-[acyl-carrier-protein] reductase 1, mitochondrial"/>
    <property type="match status" value="1"/>
</dbReference>
<dbReference type="Gene3D" id="3.90.180.10">
    <property type="entry name" value="Medium-chain alcohol dehydrogenases, catalytic domain"/>
    <property type="match status" value="1"/>
</dbReference>
<dbReference type="Gene3D" id="3.40.50.720">
    <property type="entry name" value="NAD(P)-binding Rossmann-like Domain"/>
    <property type="match status" value="1"/>
</dbReference>
<dbReference type="InterPro" id="IPR013149">
    <property type="entry name" value="ADH-like_C"/>
</dbReference>
<dbReference type="InterPro" id="IPR011032">
    <property type="entry name" value="GroES-like_sf"/>
</dbReference>
<dbReference type="InterPro" id="IPR051034">
    <property type="entry name" value="Mito_Enoyl-ACP_Reductase"/>
</dbReference>
<dbReference type="InterPro" id="IPR036291">
    <property type="entry name" value="NAD(P)-bd_dom_sf"/>
</dbReference>
<dbReference type="InterPro" id="IPR020843">
    <property type="entry name" value="PKS_ER"/>
</dbReference>
<dbReference type="PANTHER" id="PTHR43981">
    <property type="entry name" value="ENOYL-[ACYL-CARRIER-PROTEIN] REDUCTASE, MITOCHONDRIAL"/>
    <property type="match status" value="1"/>
</dbReference>
<dbReference type="PANTHER" id="PTHR43981:SF2">
    <property type="entry name" value="ENOYL-[ACYL-CARRIER-PROTEIN] REDUCTASE, MITOCHONDRIAL"/>
    <property type="match status" value="1"/>
</dbReference>
<dbReference type="Pfam" id="PF00107">
    <property type="entry name" value="ADH_zinc_N"/>
    <property type="match status" value="1"/>
</dbReference>
<dbReference type="SMART" id="SM00829">
    <property type="entry name" value="PKS_ER"/>
    <property type="match status" value="1"/>
</dbReference>
<dbReference type="SUPFAM" id="SSF50129">
    <property type="entry name" value="GroES-like"/>
    <property type="match status" value="1"/>
</dbReference>
<dbReference type="SUPFAM" id="SSF51735">
    <property type="entry name" value="NAD(P)-binding Rossmann-fold domains"/>
    <property type="match status" value="1"/>
</dbReference>
<comment type="function">
    <text evidence="1">Catalyzes the NADPH-dependent reduction of trans-2-enoyl thioesters in mitochondrial fatty acid synthesis (fatty acid synthesis type II). Fatty acid chain elongation in mitochondria uses acyl carrier protein (ACP) as an acyl group carrier, but the enzyme accepts both ACP and CoA thioesters as substrates in vitro. Required for respiration and the maintenance of the mitochondrial compartment.</text>
</comment>
<comment type="catalytic activity">
    <reaction evidence="1">
        <text>a 2,3-saturated acyl-[ACP] + NADP(+) = a (2E)-enoyl-[ACP] + NADPH + H(+)</text>
        <dbReference type="Rhea" id="RHEA:22564"/>
        <dbReference type="Rhea" id="RHEA-COMP:9925"/>
        <dbReference type="Rhea" id="RHEA-COMP:9926"/>
        <dbReference type="ChEBI" id="CHEBI:15378"/>
        <dbReference type="ChEBI" id="CHEBI:57783"/>
        <dbReference type="ChEBI" id="CHEBI:58349"/>
        <dbReference type="ChEBI" id="CHEBI:78784"/>
        <dbReference type="ChEBI" id="CHEBI:78785"/>
        <dbReference type="EC" id="1.3.1.104"/>
    </reaction>
</comment>
<comment type="subunit">
    <text evidence="2">Homodimer.</text>
</comment>
<comment type="subcellular location">
    <subcellularLocation>
        <location evidence="1">Mitochondrion matrix</location>
    </subcellularLocation>
</comment>
<comment type="similarity">
    <text evidence="4">Belongs to the zinc-containing alcohol dehydrogenase family. Quinone oxidoreductase subfamily.</text>
</comment>
<organism>
    <name type="scientific">Schizosaccharomyces pombe (strain 972 / ATCC 24843)</name>
    <name type="common">Fission yeast</name>
    <dbReference type="NCBI Taxonomy" id="284812"/>
    <lineage>
        <taxon>Eukaryota</taxon>
        <taxon>Fungi</taxon>
        <taxon>Dikarya</taxon>
        <taxon>Ascomycota</taxon>
        <taxon>Taphrinomycotina</taxon>
        <taxon>Schizosaccharomycetes</taxon>
        <taxon>Schizosaccharomycetales</taxon>
        <taxon>Schizosaccharomycetaceae</taxon>
        <taxon>Schizosaccharomyces</taxon>
    </lineage>
</organism>
<name>ETR1_SCHPO</name>
<protein>
    <recommendedName>
        <fullName evidence="2">Enoyl-[acyl-carrier-protein] reductase, mitochondrial</fullName>
        <ecNumber evidence="2">1.3.1.104</ecNumber>
    </recommendedName>
    <alternativeName>
        <fullName evidence="2">2-enoyl thioester reductase</fullName>
    </alternativeName>
</protein>
<keyword id="KW-0275">Fatty acid biosynthesis</keyword>
<keyword id="KW-0276">Fatty acid metabolism</keyword>
<keyword id="KW-0444">Lipid biosynthesis</keyword>
<keyword id="KW-0443">Lipid metabolism</keyword>
<keyword id="KW-0496">Mitochondrion</keyword>
<keyword id="KW-0521">NADP</keyword>
<keyword id="KW-0560">Oxidoreductase</keyword>
<keyword id="KW-1185">Reference proteome</keyword>
<keyword id="KW-0809">Transit peptide</keyword>